<organism>
    <name type="scientific">Pyrococcus furiosus (strain ATCC 43587 / DSM 3638 / JCM 8422 / Vc1)</name>
    <dbReference type="NCBI Taxonomy" id="186497"/>
    <lineage>
        <taxon>Archaea</taxon>
        <taxon>Methanobacteriati</taxon>
        <taxon>Methanobacteriota</taxon>
        <taxon>Thermococci</taxon>
        <taxon>Thermococcales</taxon>
        <taxon>Thermococcaceae</taxon>
        <taxon>Pyrococcus</taxon>
    </lineage>
</organism>
<keyword id="KW-0133">Cell shape</keyword>
<keyword id="KW-0963">Cytoplasm</keyword>
<keyword id="KW-0342">GTP-binding</keyword>
<keyword id="KW-0547">Nucleotide-binding</keyword>
<keyword id="KW-1185">Reference proteome</keyword>
<feature type="chain" id="PRO_0000114414" description="Tubulin-like protein CetZ">
    <location>
        <begin position="1"/>
        <end position="366"/>
    </location>
</feature>
<feature type="binding site" evidence="1">
    <location>
        <begin position="10"/>
        <end position="14"/>
    </location>
    <ligand>
        <name>GTP</name>
        <dbReference type="ChEBI" id="CHEBI:37565"/>
    </ligand>
</feature>
<feature type="binding site" evidence="1">
    <location>
        <begin position="103"/>
        <end position="105"/>
    </location>
    <ligand>
        <name>GTP</name>
        <dbReference type="ChEBI" id="CHEBI:37565"/>
    </ligand>
</feature>
<feature type="binding site" evidence="1">
    <location>
        <position position="136"/>
    </location>
    <ligand>
        <name>GTP</name>
        <dbReference type="ChEBI" id="CHEBI:37565"/>
    </ligand>
</feature>
<feature type="binding site" evidence="1">
    <location>
        <position position="163"/>
    </location>
    <ligand>
        <name>GTP</name>
        <dbReference type="ChEBI" id="CHEBI:37565"/>
    </ligand>
</feature>
<feature type="binding site" evidence="1">
    <location>
        <position position="181"/>
    </location>
    <ligand>
        <name>GTP</name>
        <dbReference type="ChEBI" id="CHEBI:37565"/>
    </ligand>
</feature>
<dbReference type="EMBL" id="AE009950">
    <property type="protein sequence ID" value="AAL81631.1"/>
    <property type="molecule type" value="Genomic_DNA"/>
</dbReference>
<dbReference type="RefSeq" id="WP_011012654.1">
    <property type="nucleotide sequence ID" value="NZ_CP023154.1"/>
</dbReference>
<dbReference type="SMR" id="Q8U0S7"/>
<dbReference type="STRING" id="186497.PF1507"/>
<dbReference type="PaxDb" id="186497-PF1507"/>
<dbReference type="KEGG" id="pfu:PF1507"/>
<dbReference type="PATRIC" id="fig|186497.12.peg.1570"/>
<dbReference type="eggNOG" id="arCOG02202">
    <property type="taxonomic scope" value="Archaea"/>
</dbReference>
<dbReference type="HOGENOM" id="CLU_058152_0_0_2"/>
<dbReference type="OrthoDB" id="329751at2157"/>
<dbReference type="PhylomeDB" id="Q8U0S7"/>
<dbReference type="Proteomes" id="UP000001013">
    <property type="component" value="Chromosome"/>
</dbReference>
<dbReference type="GO" id="GO:0032153">
    <property type="term" value="C:cell division site"/>
    <property type="evidence" value="ECO:0007669"/>
    <property type="project" value="TreeGrafter"/>
</dbReference>
<dbReference type="GO" id="GO:0005737">
    <property type="term" value="C:cytoplasm"/>
    <property type="evidence" value="ECO:0007669"/>
    <property type="project" value="UniProtKB-SubCell"/>
</dbReference>
<dbReference type="GO" id="GO:0005874">
    <property type="term" value="C:microtubule"/>
    <property type="evidence" value="ECO:0007669"/>
    <property type="project" value="InterPro"/>
</dbReference>
<dbReference type="GO" id="GO:0005525">
    <property type="term" value="F:GTP binding"/>
    <property type="evidence" value="ECO:0007669"/>
    <property type="project" value="UniProtKB-UniRule"/>
</dbReference>
<dbReference type="GO" id="GO:0003924">
    <property type="term" value="F:GTPase activity"/>
    <property type="evidence" value="ECO:0007669"/>
    <property type="project" value="InterPro"/>
</dbReference>
<dbReference type="GO" id="GO:0051301">
    <property type="term" value="P:cell division"/>
    <property type="evidence" value="ECO:0007669"/>
    <property type="project" value="TreeGrafter"/>
</dbReference>
<dbReference type="GO" id="GO:0007017">
    <property type="term" value="P:microtubule-based process"/>
    <property type="evidence" value="ECO:0007669"/>
    <property type="project" value="InterPro"/>
</dbReference>
<dbReference type="GO" id="GO:0008360">
    <property type="term" value="P:regulation of cell shape"/>
    <property type="evidence" value="ECO:0007669"/>
    <property type="project" value="UniProtKB-UniRule"/>
</dbReference>
<dbReference type="CDD" id="cd02202">
    <property type="entry name" value="CetZ_tubulin-like"/>
    <property type="match status" value="1"/>
</dbReference>
<dbReference type="FunFam" id="3.40.50.1440:FF:000065">
    <property type="entry name" value="Tubulin-like protein CetZ"/>
    <property type="match status" value="1"/>
</dbReference>
<dbReference type="Gene3D" id="3.40.50.1440">
    <property type="entry name" value="Tubulin/FtsZ, GTPase domain"/>
    <property type="match status" value="1"/>
</dbReference>
<dbReference type="HAMAP" id="MF_01946">
    <property type="entry name" value="CetZ"/>
    <property type="match status" value="1"/>
</dbReference>
<dbReference type="InterPro" id="IPR032907">
    <property type="entry name" value="CetZ"/>
</dbReference>
<dbReference type="InterPro" id="IPR048737">
    <property type="entry name" value="CetZ_C"/>
</dbReference>
<dbReference type="InterPro" id="IPR045061">
    <property type="entry name" value="FtsZ/CetZ"/>
</dbReference>
<dbReference type="InterPro" id="IPR036525">
    <property type="entry name" value="Tubulin/FtsZ_GTPase_sf"/>
</dbReference>
<dbReference type="InterPro" id="IPR017975">
    <property type="entry name" value="Tubulin_CS"/>
</dbReference>
<dbReference type="InterPro" id="IPR003008">
    <property type="entry name" value="Tubulin_FtsZ_GTPase"/>
</dbReference>
<dbReference type="PANTHER" id="PTHR30314">
    <property type="entry name" value="CELL DIVISION PROTEIN FTSZ-RELATED"/>
    <property type="match status" value="1"/>
</dbReference>
<dbReference type="PANTHER" id="PTHR30314:SF10">
    <property type="entry name" value="TUBULIN-LIKE PROTEIN CETZ"/>
    <property type="match status" value="1"/>
</dbReference>
<dbReference type="Pfam" id="PF21011">
    <property type="entry name" value="CetZ_C"/>
    <property type="match status" value="1"/>
</dbReference>
<dbReference type="Pfam" id="PF00091">
    <property type="entry name" value="Tubulin"/>
    <property type="match status" value="1"/>
</dbReference>
<dbReference type="PRINTS" id="PR00423">
    <property type="entry name" value="CELLDVISFTSZ"/>
</dbReference>
<dbReference type="SMART" id="SM00864">
    <property type="entry name" value="Tubulin"/>
    <property type="match status" value="1"/>
</dbReference>
<dbReference type="SUPFAM" id="SSF52490">
    <property type="entry name" value="Tubulin nucleotide-binding domain-like"/>
    <property type="match status" value="1"/>
</dbReference>
<dbReference type="PROSITE" id="PS00227">
    <property type="entry name" value="TUBULIN"/>
    <property type="match status" value="1"/>
</dbReference>
<protein>
    <recommendedName>
        <fullName evidence="1">Tubulin-like protein CetZ</fullName>
    </recommendedName>
</protein>
<sequence>MRAIIIGIGQCGTKIADIFSLVDFEALAINTSRGDLEYLKHIPPDRRILIGESIVGGKGVNANPVLGREAMKRDLPMVMKKISSLVGFEDVDIFFLTFGFGGGTGAGGTPVLAEALKEEYPDSLVVAIGALPLKEEGIRPTINAAITIDKLSKIVDSIIAIDNNKLKESNEDISQAYERINYAIVERIASLLALIDVPGEQTLDASDLKFVLRAMGSFATVGYAKADATKIKSLSRLIIRSFENEGLYLDVNIESALYGLVAIHGPPEALKANEIFEALNELTQRIRGKQIFRGFYPDPREREVEVVTLLSGIYESKSIEEIVITAKKYAQEFLKAKEEGESKKKKLLSGLPDFDDIYPGEADDQS</sequence>
<name>CETZ_PYRFU</name>
<gene>
    <name evidence="1" type="primary">cetZ</name>
    <name type="synonym">ftsZ3</name>
    <name type="ordered locus">PF1507</name>
</gene>
<evidence type="ECO:0000255" key="1">
    <source>
        <dbReference type="HAMAP-Rule" id="MF_01946"/>
    </source>
</evidence>
<accession>Q8U0S7</accession>
<comment type="function">
    <text evidence="1">Involved in cell shape control.</text>
</comment>
<comment type="subcellular location">
    <subcellularLocation>
        <location evidence="1">Cytoplasm</location>
    </subcellularLocation>
</comment>
<comment type="similarity">
    <text evidence="1">Belongs to the CetZ family.</text>
</comment>
<proteinExistence type="inferred from homology"/>
<reference key="1">
    <citation type="journal article" date="1999" name="Genetics">
        <title>Divergence of the hyperthermophilic archaea Pyrococcus furiosus and P. horikoshii inferred from complete genomic sequences.</title>
        <authorList>
            <person name="Maeder D.L."/>
            <person name="Weiss R.B."/>
            <person name="Dunn D.M."/>
            <person name="Cherry J.L."/>
            <person name="Gonzalez J.M."/>
            <person name="DiRuggiero J."/>
            <person name="Robb F.T."/>
        </authorList>
    </citation>
    <scope>NUCLEOTIDE SEQUENCE [LARGE SCALE GENOMIC DNA]</scope>
    <source>
        <strain>ATCC 43587 / DSM 3638 / JCM 8422 / Vc1</strain>
    </source>
</reference>